<keyword id="KW-0029">Amino-acid transport</keyword>
<keyword id="KW-1003">Cell membrane</keyword>
<keyword id="KW-1015">Disulfide bond</keyword>
<keyword id="KW-0325">Glycoprotein</keyword>
<keyword id="KW-0458">Lysosome</keyword>
<keyword id="KW-0472">Membrane</keyword>
<keyword id="KW-1185">Reference proteome</keyword>
<keyword id="KW-0769">Symport</keyword>
<keyword id="KW-0812">Transmembrane</keyword>
<keyword id="KW-1133">Transmembrane helix</keyword>
<keyword id="KW-0813">Transport</keyword>
<name>S36A1_RAT</name>
<dbReference type="EMBL" id="AF361239">
    <property type="protein sequence ID" value="AAK67316.1"/>
    <property type="molecule type" value="mRNA"/>
</dbReference>
<dbReference type="RefSeq" id="NP_569099.1">
    <property type="nucleotide sequence ID" value="NM_130415.2"/>
</dbReference>
<dbReference type="RefSeq" id="XP_008765881.1">
    <property type="nucleotide sequence ID" value="XM_008767659.2"/>
</dbReference>
<dbReference type="RefSeq" id="XP_063124425.1">
    <property type="nucleotide sequence ID" value="XM_063268355.1"/>
</dbReference>
<dbReference type="SMR" id="Q924A5"/>
<dbReference type="FunCoup" id="Q924A5">
    <property type="interactions" value="797"/>
</dbReference>
<dbReference type="STRING" id="10116.ENSRNOP00000074412"/>
<dbReference type="GlyCosmos" id="Q924A5">
    <property type="glycosylation" value="3 sites, No reported glycans"/>
</dbReference>
<dbReference type="GlyGen" id="Q924A5">
    <property type="glycosylation" value="3 sites"/>
</dbReference>
<dbReference type="PhosphoSitePlus" id="Q924A5"/>
<dbReference type="PaxDb" id="10116-ENSRNOP00000016755"/>
<dbReference type="Ensembl" id="ENSRNOT00000016755.6">
    <property type="protein sequence ID" value="ENSRNOP00000016755.3"/>
    <property type="gene ID" value="ENSRNOG00000012356.6"/>
</dbReference>
<dbReference type="GeneID" id="155205"/>
<dbReference type="KEGG" id="rno:155205"/>
<dbReference type="UCSC" id="RGD:619801">
    <property type="organism name" value="rat"/>
</dbReference>
<dbReference type="AGR" id="RGD:619801"/>
<dbReference type="CTD" id="206358"/>
<dbReference type="RGD" id="619801">
    <property type="gene designation" value="Slc36a1"/>
</dbReference>
<dbReference type="eggNOG" id="KOG1304">
    <property type="taxonomic scope" value="Eukaryota"/>
</dbReference>
<dbReference type="GeneTree" id="ENSGT00940000156583"/>
<dbReference type="HOGENOM" id="CLU_009646_0_2_1"/>
<dbReference type="InParanoid" id="Q924A5"/>
<dbReference type="OrthoDB" id="73585at9989"/>
<dbReference type="PhylomeDB" id="Q924A5"/>
<dbReference type="TreeFam" id="TF314873"/>
<dbReference type="Reactome" id="R-RNO-352230">
    <property type="pathway name" value="Amino acid transport across the plasma membrane"/>
</dbReference>
<dbReference type="Reactome" id="R-RNO-428559">
    <property type="pathway name" value="Proton-coupled neutral amino acid transporters"/>
</dbReference>
<dbReference type="PRO" id="PR:Q924A5"/>
<dbReference type="Proteomes" id="UP000002494">
    <property type="component" value="Chromosome 10"/>
</dbReference>
<dbReference type="Bgee" id="ENSRNOG00000012356">
    <property type="expression patterns" value="Expressed in jejunum and 18 other cell types or tissues"/>
</dbReference>
<dbReference type="GO" id="GO:0016324">
    <property type="term" value="C:apical plasma membrane"/>
    <property type="evidence" value="ECO:0007669"/>
    <property type="project" value="UniProtKB-SubCell"/>
</dbReference>
<dbReference type="GO" id="GO:0005783">
    <property type="term" value="C:endoplasmic reticulum"/>
    <property type="evidence" value="ECO:0007669"/>
    <property type="project" value="Ensembl"/>
</dbReference>
<dbReference type="GO" id="GO:0005765">
    <property type="term" value="C:lysosomal membrane"/>
    <property type="evidence" value="ECO:0007669"/>
    <property type="project" value="UniProtKB-SubCell"/>
</dbReference>
<dbReference type="GO" id="GO:0005764">
    <property type="term" value="C:lysosome"/>
    <property type="evidence" value="ECO:0000314"/>
    <property type="project" value="UniProtKB"/>
</dbReference>
<dbReference type="GO" id="GO:0005886">
    <property type="term" value="C:plasma membrane"/>
    <property type="evidence" value="ECO:0000314"/>
    <property type="project" value="UniProtKB"/>
</dbReference>
<dbReference type="GO" id="GO:0005774">
    <property type="term" value="C:vacuolar membrane"/>
    <property type="evidence" value="ECO:0000318"/>
    <property type="project" value="GO_Central"/>
</dbReference>
<dbReference type="GO" id="GO:0015411">
    <property type="term" value="F:ABC-type taurine transporter transporter activity"/>
    <property type="evidence" value="ECO:0007669"/>
    <property type="project" value="Ensembl"/>
</dbReference>
<dbReference type="GO" id="GO:0022853">
    <property type="term" value="F:active monoatomic ion transmembrane transporter activity"/>
    <property type="evidence" value="ECO:0007669"/>
    <property type="project" value="UniProtKB-ARBA"/>
</dbReference>
<dbReference type="GO" id="GO:0022858">
    <property type="term" value="F:alanine transmembrane transporter activity"/>
    <property type="evidence" value="ECO:0000266"/>
    <property type="project" value="RGD"/>
</dbReference>
<dbReference type="GO" id="GO:0005280">
    <property type="term" value="F:amino acid:proton symporter activity"/>
    <property type="evidence" value="ECO:0000314"/>
    <property type="project" value="UniProtKB"/>
</dbReference>
<dbReference type="GO" id="GO:0015187">
    <property type="term" value="F:glycine transmembrane transporter activity"/>
    <property type="evidence" value="ECO:0000266"/>
    <property type="project" value="RGD"/>
</dbReference>
<dbReference type="GO" id="GO:0015180">
    <property type="term" value="F:L-alanine transmembrane transporter activity"/>
    <property type="evidence" value="ECO:0000266"/>
    <property type="project" value="RGD"/>
</dbReference>
<dbReference type="GO" id="GO:0015193">
    <property type="term" value="F:L-proline transmembrane transporter activity"/>
    <property type="evidence" value="ECO:0000266"/>
    <property type="project" value="RGD"/>
</dbReference>
<dbReference type="GO" id="GO:0015175">
    <property type="term" value="F:neutral L-amino acid transmembrane transporter activity"/>
    <property type="evidence" value="ECO:0000314"/>
    <property type="project" value="UniProtKB"/>
</dbReference>
<dbReference type="GO" id="GO:0005297">
    <property type="term" value="F:proline:proton symporter activity"/>
    <property type="evidence" value="ECO:0000314"/>
    <property type="project" value="UniProtKB"/>
</dbReference>
<dbReference type="GO" id="GO:0015078">
    <property type="term" value="F:proton transmembrane transporter activity"/>
    <property type="evidence" value="ECO:0000314"/>
    <property type="project" value="UniProtKB"/>
</dbReference>
<dbReference type="GO" id="GO:0032328">
    <property type="term" value="P:alanine transport"/>
    <property type="evidence" value="ECO:0000266"/>
    <property type="project" value="RGD"/>
</dbReference>
<dbReference type="GO" id="GO:0089718">
    <property type="term" value="P:amino acid import across plasma membrane"/>
    <property type="evidence" value="ECO:0000266"/>
    <property type="project" value="RGD"/>
</dbReference>
<dbReference type="GO" id="GO:0015816">
    <property type="term" value="P:glycine transport"/>
    <property type="evidence" value="ECO:0000266"/>
    <property type="project" value="RGD"/>
</dbReference>
<dbReference type="GO" id="GO:0015808">
    <property type="term" value="P:L-alanine transport"/>
    <property type="evidence" value="ECO:0000266"/>
    <property type="project" value="RGD"/>
</dbReference>
<dbReference type="GO" id="GO:0015804">
    <property type="term" value="P:neutral amino acid transport"/>
    <property type="evidence" value="ECO:0000314"/>
    <property type="project" value="UniProtKB"/>
</dbReference>
<dbReference type="GO" id="GO:0035524">
    <property type="term" value="P:proline transmembrane transport"/>
    <property type="evidence" value="ECO:0000318"/>
    <property type="project" value="GO_Central"/>
</dbReference>
<dbReference type="GO" id="GO:0015824">
    <property type="term" value="P:proline transport"/>
    <property type="evidence" value="ECO:0000266"/>
    <property type="project" value="RGD"/>
</dbReference>
<dbReference type="GO" id="GO:1902600">
    <property type="term" value="P:proton transmembrane transport"/>
    <property type="evidence" value="ECO:0000314"/>
    <property type="project" value="UniProtKB"/>
</dbReference>
<dbReference type="GO" id="GO:0015734">
    <property type="term" value="P:taurine transmembrane transport"/>
    <property type="evidence" value="ECO:0000266"/>
    <property type="project" value="RGD"/>
</dbReference>
<dbReference type="InterPro" id="IPR013057">
    <property type="entry name" value="AA_transpt_TM"/>
</dbReference>
<dbReference type="PANTHER" id="PTHR22950">
    <property type="entry name" value="AMINO ACID TRANSPORTER"/>
    <property type="match status" value="1"/>
</dbReference>
<dbReference type="PANTHER" id="PTHR22950:SF188">
    <property type="entry name" value="PROTON-COUPLED AMINO ACID TRANSPORTER 1"/>
    <property type="match status" value="1"/>
</dbReference>
<dbReference type="Pfam" id="PF01490">
    <property type="entry name" value="Aa_trans"/>
    <property type="match status" value="1"/>
</dbReference>
<comment type="function">
    <text evidence="6 7">Electrogenic proton/amino acid symporter with selectivity for small apolar L-amino acids, their D-enantiomers and selected amino acid derivatives such as 4-aminobutanoate/GABA (PubMed:11390972, PubMed:12598615). May be involved in the efflux from the lysosomal compartment of neutral amino acids resulting from proteolysis (PubMed:12598615). May play a role in specifying sites for exocytosis in neurons (PubMed:12598615).</text>
</comment>
<comment type="catalytic activity">
    <reaction evidence="3">
        <text>glycine(in) + H(+)(in) = glycine(out) + H(+)(out)</text>
        <dbReference type="Rhea" id="RHEA:28899"/>
        <dbReference type="ChEBI" id="CHEBI:15378"/>
        <dbReference type="ChEBI" id="CHEBI:57305"/>
    </reaction>
</comment>
<comment type="catalytic activity">
    <reaction evidence="7">
        <text>L-proline(out) + H(+)(out) = L-proline(in) + H(+)(in)</text>
        <dbReference type="Rhea" id="RHEA:28963"/>
        <dbReference type="ChEBI" id="CHEBI:15378"/>
        <dbReference type="ChEBI" id="CHEBI:60039"/>
    </reaction>
</comment>
<comment type="catalytic activity">
    <reaction evidence="7">
        <text>D-proline(out) + H(+)(out) = D-proline(in) + H(+)(in)</text>
        <dbReference type="Rhea" id="RHEA:70643"/>
        <dbReference type="ChEBI" id="CHEBI:15378"/>
        <dbReference type="ChEBI" id="CHEBI:57726"/>
    </reaction>
</comment>
<comment type="catalytic activity">
    <reaction evidence="7">
        <text>L-alanine(in) + H(+)(in) = L-alanine(out) + H(+)(out)</text>
        <dbReference type="Rhea" id="RHEA:29443"/>
        <dbReference type="ChEBI" id="CHEBI:15378"/>
        <dbReference type="ChEBI" id="CHEBI:57972"/>
    </reaction>
</comment>
<comment type="catalytic activity">
    <reaction evidence="3">
        <text>D-alanine(in) + H(+)(in) = D-alanine(out) + H(+)(out)</text>
        <dbReference type="Rhea" id="RHEA:28903"/>
        <dbReference type="ChEBI" id="CHEBI:15378"/>
        <dbReference type="ChEBI" id="CHEBI:57416"/>
    </reaction>
</comment>
<comment type="catalytic activity">
    <reaction evidence="3">
        <text>L-serine(in) + H(+)(in) = L-serine(out) + H(+)(out)</text>
        <dbReference type="Rhea" id="RHEA:28887"/>
        <dbReference type="ChEBI" id="CHEBI:15378"/>
        <dbReference type="ChEBI" id="CHEBI:33384"/>
    </reaction>
</comment>
<comment type="catalytic activity">
    <reaction evidence="3">
        <text>D-serine(out) + H(+)(out) = D-serine(in) + H(+)(in)</text>
        <dbReference type="Rhea" id="RHEA:70647"/>
        <dbReference type="ChEBI" id="CHEBI:15378"/>
        <dbReference type="ChEBI" id="CHEBI:35247"/>
    </reaction>
</comment>
<comment type="catalytic activity">
    <reaction evidence="6 7">
        <text>4-aminobutanoate(in) + H(+)(in) = 4-aminobutanoate(out) + H(+)(out)</text>
        <dbReference type="Rhea" id="RHEA:28915"/>
        <dbReference type="ChEBI" id="CHEBI:15378"/>
        <dbReference type="ChEBI" id="CHEBI:59888"/>
    </reaction>
</comment>
<comment type="catalytic activity">
    <reaction evidence="3">
        <text>beta-alanine(in) + H(+)(in) = beta-alanine(out) + H(+)(out)</text>
        <dbReference type="Rhea" id="RHEA:29459"/>
        <dbReference type="ChEBI" id="CHEBI:15378"/>
        <dbReference type="ChEBI" id="CHEBI:57966"/>
    </reaction>
</comment>
<comment type="biophysicochemical properties">
    <kinetics>
        <KM evidence="6">499 uM for 4-aminobutanoate</KM>
        <Vmax evidence="6">2.5 pmol/min/ug enzyme with 4-aminobutanoate as substrate</Vmax>
    </kinetics>
</comment>
<comment type="subcellular location">
    <subcellularLocation>
        <location evidence="7">Cell membrane</location>
        <topology evidence="4">Multi-pass membrane protein</topology>
    </subcellularLocation>
    <subcellularLocation>
        <location evidence="2">Apical cell membrane</location>
        <topology evidence="4">Multi-pass membrane protein</topology>
    </subcellularLocation>
    <subcellularLocation>
        <location evidence="6 7">Lysosome membrane</location>
        <topology evidence="4">Multi-pass membrane protein</topology>
    </subcellularLocation>
    <text evidence="7">In neurons, colocalizes with the exocyst complex in the axonal processes.</text>
</comment>
<comment type="tissue specificity">
    <text evidence="6 7">Widely expressed and predominantly expressed in brain. Within the brain, expression restricted to neurons and not detected in glial cells. Abundant in regions rich in neurons using glutamate and GABA such as Purkinje cells in the cerebellum and pyramidal cells in the hippocampus.</text>
</comment>
<comment type="similarity">
    <text evidence="9">Belongs to the amino acid/polyamine transporter 2 family.</text>
</comment>
<feature type="chain" id="PRO_0000093827" description="Proton-coupled amino acid transporter 1">
    <location>
        <begin position="1"/>
        <end position="475"/>
    </location>
</feature>
<feature type="topological domain" description="Cytoplasmic" evidence="4">
    <location>
        <begin position="1"/>
        <end position="50"/>
    </location>
</feature>
<feature type="transmembrane region" description="Helical" evidence="4">
    <location>
        <begin position="51"/>
        <end position="71"/>
    </location>
</feature>
<feature type="topological domain" description="Extracellular" evidence="4">
    <location>
        <begin position="72"/>
        <end position="77"/>
    </location>
</feature>
<feature type="transmembrane region" description="Helical" evidence="4">
    <location>
        <begin position="78"/>
        <end position="98"/>
    </location>
</feature>
<feature type="topological domain" description="Cytoplasmic" evidence="4">
    <location>
        <begin position="99"/>
        <end position="140"/>
    </location>
</feature>
<feature type="transmembrane region" description="Helical" evidence="4">
    <location>
        <begin position="141"/>
        <end position="161"/>
    </location>
</feature>
<feature type="topological domain" description="Extracellular" evidence="4">
    <location>
        <begin position="162"/>
        <end position="189"/>
    </location>
</feature>
<feature type="transmembrane region" description="Helical" evidence="4">
    <location>
        <begin position="190"/>
        <end position="210"/>
    </location>
</feature>
<feature type="topological domain" description="Cytoplasmic" evidence="4">
    <location>
        <begin position="211"/>
        <end position="214"/>
    </location>
</feature>
<feature type="transmembrane region" description="Helical" evidence="4">
    <location>
        <begin position="215"/>
        <end position="235"/>
    </location>
</feature>
<feature type="topological domain" description="Extracellular" evidence="4">
    <location>
        <begin position="236"/>
        <end position="256"/>
    </location>
</feature>
<feature type="transmembrane region" description="Helical" evidence="4">
    <location>
        <begin position="257"/>
        <end position="277"/>
    </location>
</feature>
<feature type="topological domain" description="Cytoplasmic" evidence="4">
    <location>
        <begin position="278"/>
        <end position="288"/>
    </location>
</feature>
<feature type="transmembrane region" description="Helical" evidence="4">
    <location>
        <begin position="289"/>
        <end position="309"/>
    </location>
</feature>
<feature type="topological domain" description="Extracellular" evidence="4">
    <location>
        <begin position="310"/>
        <end position="341"/>
    </location>
</feature>
<feature type="transmembrane region" description="Helical" evidence="4">
    <location>
        <begin position="342"/>
        <end position="362"/>
    </location>
</feature>
<feature type="topological domain" description="Cytoplasmic" evidence="4">
    <location>
        <begin position="363"/>
        <end position="371"/>
    </location>
</feature>
<feature type="transmembrane region" description="Helical" evidence="4">
    <location>
        <begin position="372"/>
        <end position="392"/>
    </location>
</feature>
<feature type="topological domain" description="Extracellular" evidence="4">
    <location>
        <begin position="393"/>
        <end position="396"/>
    </location>
</feature>
<feature type="transmembrane region" description="Helical" evidence="4">
    <location>
        <begin position="397"/>
        <end position="417"/>
    </location>
</feature>
<feature type="topological domain" description="Cytoplasmic" evidence="4">
    <location>
        <begin position="418"/>
        <end position="438"/>
    </location>
</feature>
<feature type="transmembrane region" description="Helical" evidence="4">
    <location>
        <begin position="439"/>
        <end position="459"/>
    </location>
</feature>
<feature type="topological domain" description="Extracellular" evidence="4">
    <location>
        <begin position="460"/>
        <end position="475"/>
    </location>
</feature>
<feature type="region of interest" description="Disordered" evidence="5">
    <location>
        <begin position="1"/>
        <end position="32"/>
    </location>
</feature>
<feature type="compositionally biased region" description="Basic and acidic residues" evidence="5">
    <location>
        <begin position="1"/>
        <end position="15"/>
    </location>
</feature>
<feature type="glycosylation site" description="N-linked (GlcNAc...) asparagine" evidence="4">
    <location>
        <position position="173"/>
    </location>
</feature>
<feature type="glycosylation site" description="N-linked (GlcNAc...) asparagine" evidence="4">
    <location>
        <position position="182"/>
    </location>
</feature>
<feature type="glycosylation site" description="N-linked (GlcNAc...) asparagine" evidence="4">
    <location>
        <position position="469"/>
    </location>
</feature>
<feature type="disulfide bond" evidence="1">
    <location>
        <begin position="179"/>
        <end position="328"/>
    </location>
</feature>
<feature type="sequence conflict" description="In Ref. 2; no nucleotide entry." evidence="9" ref="2">
    <original>L</original>
    <variation>M</variation>
    <location>
        <position position="108"/>
    </location>
</feature>
<reference evidence="9 11" key="1">
    <citation type="journal article" date="2001" name="Proc. Natl. Acad. Sci. U.S.A.">
        <title>Identification and characterization of a lysosomal transporter for small neutral amino acids.</title>
        <authorList>
            <person name="Sagne C."/>
            <person name="Agulhon C."/>
            <person name="Ravassard P."/>
            <person name="Darmon M."/>
            <person name="Hamon M."/>
            <person name="El Mestikawy S."/>
            <person name="Gasnier B."/>
            <person name="Giros B."/>
        </authorList>
    </citation>
    <scope>NUCLEOTIDE SEQUENCE [MRNA]</scope>
    <scope>FUNCTION</scope>
    <scope>TRANSPORTER ACTIVITY</scope>
    <scope>BIOPHYSICOCHEMICAL PROPERTIES</scope>
    <scope>SUBCELLULAR LOCATION</scope>
    <scope>TISSUE SPECIFICITY</scope>
    <source>
        <strain evidence="11">Sprague-Dawley</strain>
        <tissue evidence="6">Hippocampus</tissue>
    </source>
</reference>
<reference evidence="9" key="2">
    <citation type="journal article" date="2003" name="J. Neurosci.">
        <title>The H+-coupled electrogenic lysosomal amino acid transporter LYAAT1 localizes to the axon and plasma membrane of hippocampal neurons.</title>
        <authorList>
            <person name="Wreden C.C."/>
            <person name="Johnson J."/>
            <person name="Tran C."/>
            <person name="Seal R.P."/>
            <person name="Copenhagen D.R."/>
            <person name="Reimer R.J."/>
            <person name="Edwards R.H."/>
        </authorList>
    </citation>
    <scope>NUCLEOTIDE SEQUENCE [MRNA]</scope>
    <scope>FUNCTION</scope>
    <scope>TRANSPORTER ACTIVITY</scope>
    <scope>SUBCELLULAR LOCATION</scope>
    <scope>TISSUE SPECIFICITY</scope>
    <source>
        <tissue evidence="7">Brain</tissue>
    </source>
</reference>
<sequence length="475" mass="52569">MSTQRLRNEDYHDYSSTDVSPEESPSEGLGSFSPGSYQRLGENSSMTWFQTLIHLLKGNIGTGLLGLPLAVKNAGLLLGPLSLLVIGIVAVHCMGILVKCAHHLCRRLNKPFLDYGDTVMYGLECSPSTWIRNHSHWGRRIVDFFLVVTQLGFCCVYFVFLADNFKQVIEAANGTTTNCNNNETVILTPTMDSRLYMLTFLPFLVLLSFIRNLRILSIFSLLANISMFVSLIMIYQFIVQRIPDPSHLPLVAPWKTYPLFFGTAIFAFEGIGVVLPLENKMKDSQKFPLILYLGMAIITVLYISLGSLGYLQFGADIKGSITLNLPNCWLYQSVKLLYSIGIFFTYALQFYVAAEIIIPAIVSRVPERFELVVDLSARTAMVCVTCVLAVLIPRLDLVISLVGSVSSSALALIIPPLLEVTTYYGEGISPLTITKDALISILGFVGFVVGTYESLWELIQPSHSDSSTNSTSAFI</sequence>
<organism>
    <name type="scientific">Rattus norvegicus</name>
    <name type="common">Rat</name>
    <dbReference type="NCBI Taxonomy" id="10116"/>
    <lineage>
        <taxon>Eukaryota</taxon>
        <taxon>Metazoa</taxon>
        <taxon>Chordata</taxon>
        <taxon>Craniata</taxon>
        <taxon>Vertebrata</taxon>
        <taxon>Euteleostomi</taxon>
        <taxon>Mammalia</taxon>
        <taxon>Eutheria</taxon>
        <taxon>Euarchontoglires</taxon>
        <taxon>Glires</taxon>
        <taxon>Rodentia</taxon>
        <taxon>Myomorpha</taxon>
        <taxon>Muroidea</taxon>
        <taxon>Muridae</taxon>
        <taxon>Murinae</taxon>
        <taxon>Rattus</taxon>
    </lineage>
</organism>
<proteinExistence type="evidence at protein level"/>
<protein>
    <recommendedName>
        <fullName evidence="10">Proton-coupled amino acid transporter 1</fullName>
        <shortName evidence="10">Proton/amino acid transporter 1</shortName>
    </recommendedName>
    <alternativeName>
        <fullName evidence="8">Lysosomal amino acid transporter 1</fullName>
        <shortName evidence="8">LYAAT-1</shortName>
    </alternativeName>
    <alternativeName>
        <fullName>Neutral amino acid/proton symporter</fullName>
    </alternativeName>
    <alternativeName>
        <fullName evidence="12">Solute carrier family 36 member 1</fullName>
    </alternativeName>
</protein>
<gene>
    <name evidence="12" type="primary">Slc36a1</name>
    <name evidence="8" type="synonym">Lyaat1</name>
</gene>
<accession>Q924A5</accession>
<evidence type="ECO:0000250" key="1"/>
<evidence type="ECO:0000250" key="2">
    <source>
        <dbReference type="UniProtKB" id="Q7Z2H8"/>
    </source>
</evidence>
<evidence type="ECO:0000250" key="3">
    <source>
        <dbReference type="UniProtKB" id="Q8K4D3"/>
    </source>
</evidence>
<evidence type="ECO:0000255" key="4"/>
<evidence type="ECO:0000256" key="5">
    <source>
        <dbReference type="SAM" id="MobiDB-lite"/>
    </source>
</evidence>
<evidence type="ECO:0000269" key="6">
    <source>
    </source>
</evidence>
<evidence type="ECO:0000269" key="7">
    <source>
    </source>
</evidence>
<evidence type="ECO:0000303" key="8">
    <source>
    </source>
</evidence>
<evidence type="ECO:0000305" key="9"/>
<evidence type="ECO:0000305" key="10">
    <source>
    </source>
</evidence>
<evidence type="ECO:0000312" key="11">
    <source>
        <dbReference type="EMBL" id="AAK67316.1"/>
    </source>
</evidence>
<evidence type="ECO:0000312" key="12">
    <source>
        <dbReference type="RGD" id="619801"/>
    </source>
</evidence>